<reference key="1">
    <citation type="journal article" date="2003" name="DNA Res.">
        <title>Complete genome structure of Gloeobacter violaceus PCC 7421, a cyanobacterium that lacks thylakoids.</title>
        <authorList>
            <person name="Nakamura Y."/>
            <person name="Kaneko T."/>
            <person name="Sato S."/>
            <person name="Mimuro M."/>
            <person name="Miyashita H."/>
            <person name="Tsuchiya T."/>
            <person name="Sasamoto S."/>
            <person name="Watanabe A."/>
            <person name="Kawashima K."/>
            <person name="Kishida Y."/>
            <person name="Kiyokawa C."/>
            <person name="Kohara M."/>
            <person name="Matsumoto M."/>
            <person name="Matsuno A."/>
            <person name="Nakazaki N."/>
            <person name="Shimpo S."/>
            <person name="Takeuchi C."/>
            <person name="Yamada M."/>
            <person name="Tabata S."/>
        </authorList>
    </citation>
    <scope>NUCLEOTIDE SEQUENCE [LARGE SCALE GENOMIC DNA]</scope>
    <source>
        <strain>ATCC 29082 / PCC 7421</strain>
    </source>
</reference>
<comment type="function">
    <text evidence="1">Catalyzes the condensation of pantoate with beta-alanine in an ATP-dependent reaction via a pantoyl-adenylate intermediate.</text>
</comment>
<comment type="function">
    <text evidence="1">Catalyzes the transfer of a phosphate group from ATP to either CMP or dCMP to form CDP or dCDP and ADP, respectively.</text>
</comment>
<comment type="catalytic activity">
    <reaction evidence="1">
        <text>(R)-pantoate + beta-alanine + ATP = (R)-pantothenate + AMP + diphosphate + H(+)</text>
        <dbReference type="Rhea" id="RHEA:10912"/>
        <dbReference type="ChEBI" id="CHEBI:15378"/>
        <dbReference type="ChEBI" id="CHEBI:15980"/>
        <dbReference type="ChEBI" id="CHEBI:29032"/>
        <dbReference type="ChEBI" id="CHEBI:30616"/>
        <dbReference type="ChEBI" id="CHEBI:33019"/>
        <dbReference type="ChEBI" id="CHEBI:57966"/>
        <dbReference type="ChEBI" id="CHEBI:456215"/>
        <dbReference type="EC" id="6.3.2.1"/>
    </reaction>
</comment>
<comment type="catalytic activity">
    <reaction evidence="1">
        <text>CMP + ATP = CDP + ADP</text>
        <dbReference type="Rhea" id="RHEA:11600"/>
        <dbReference type="ChEBI" id="CHEBI:30616"/>
        <dbReference type="ChEBI" id="CHEBI:58069"/>
        <dbReference type="ChEBI" id="CHEBI:60377"/>
        <dbReference type="ChEBI" id="CHEBI:456216"/>
        <dbReference type="EC" id="2.7.4.25"/>
    </reaction>
</comment>
<comment type="catalytic activity">
    <reaction evidence="1">
        <text>dCMP + ATP = dCDP + ADP</text>
        <dbReference type="Rhea" id="RHEA:25094"/>
        <dbReference type="ChEBI" id="CHEBI:30616"/>
        <dbReference type="ChEBI" id="CHEBI:57566"/>
        <dbReference type="ChEBI" id="CHEBI:58593"/>
        <dbReference type="ChEBI" id="CHEBI:456216"/>
        <dbReference type="EC" id="2.7.4.25"/>
    </reaction>
</comment>
<comment type="pathway">
    <text evidence="1">Cofactor biosynthesis; (R)-pantothenate biosynthesis; (R)-pantothenate from (R)-pantoate and beta-alanine: step 1/1.</text>
</comment>
<comment type="subcellular location">
    <subcellularLocation>
        <location evidence="1">Cytoplasm</location>
    </subcellularLocation>
</comment>
<comment type="similarity">
    <text evidence="1">In the N-terminal section; belongs to the pantothenate synthetase family.</text>
</comment>
<comment type="similarity">
    <text evidence="1">In the C-terminal section; belongs to the cytidylate kinase family. Type 1 subfamily.</text>
</comment>
<organism>
    <name type="scientific">Gloeobacter violaceus (strain ATCC 29082 / PCC 7421)</name>
    <dbReference type="NCBI Taxonomy" id="251221"/>
    <lineage>
        <taxon>Bacteria</taxon>
        <taxon>Bacillati</taxon>
        <taxon>Cyanobacteriota</taxon>
        <taxon>Cyanophyceae</taxon>
        <taxon>Gloeobacterales</taxon>
        <taxon>Gloeobacteraceae</taxon>
        <taxon>Gloeobacter</taxon>
    </lineage>
</organism>
<name>PANCY_GLOVI</name>
<evidence type="ECO:0000255" key="1">
    <source>
        <dbReference type="HAMAP-Rule" id="MF_01349"/>
    </source>
</evidence>
<dbReference type="EC" id="6.3.2.1" evidence="1"/>
<dbReference type="EC" id="2.7.4.25" evidence="1"/>
<dbReference type="EMBL" id="BA000045">
    <property type="protein sequence ID" value="BAC89747.1"/>
    <property type="molecule type" value="Genomic_DNA"/>
</dbReference>
<dbReference type="RefSeq" id="NP_924752.1">
    <property type="nucleotide sequence ID" value="NC_005125.1"/>
</dbReference>
<dbReference type="RefSeq" id="WP_011141804.1">
    <property type="nucleotide sequence ID" value="NC_005125.1"/>
</dbReference>
<dbReference type="SMR" id="Q7NJM6"/>
<dbReference type="FunCoup" id="Q7NJM6">
    <property type="interactions" value="265"/>
</dbReference>
<dbReference type="STRING" id="251221.gene:10759298"/>
<dbReference type="EnsemblBacteria" id="BAC89747">
    <property type="protein sequence ID" value="BAC89747"/>
    <property type="gene ID" value="BAC89747"/>
</dbReference>
<dbReference type="KEGG" id="gvi:gll1806"/>
<dbReference type="PATRIC" id="fig|251221.4.peg.1840"/>
<dbReference type="eggNOG" id="COG0283">
    <property type="taxonomic scope" value="Bacteria"/>
</dbReference>
<dbReference type="eggNOG" id="COG0414">
    <property type="taxonomic scope" value="Bacteria"/>
</dbReference>
<dbReference type="HOGENOM" id="CLU_037427_0_0_3"/>
<dbReference type="InParanoid" id="Q7NJM6"/>
<dbReference type="OrthoDB" id="9773087at2"/>
<dbReference type="PhylomeDB" id="Q7NJM6"/>
<dbReference type="UniPathway" id="UPA00028">
    <property type="reaction ID" value="UER00005"/>
</dbReference>
<dbReference type="Proteomes" id="UP000000557">
    <property type="component" value="Chromosome"/>
</dbReference>
<dbReference type="GO" id="GO:0005829">
    <property type="term" value="C:cytosol"/>
    <property type="evidence" value="ECO:0000318"/>
    <property type="project" value="GO_Central"/>
</dbReference>
<dbReference type="GO" id="GO:0004127">
    <property type="term" value="F:(d)CMP kinase activity"/>
    <property type="evidence" value="ECO:0000318"/>
    <property type="project" value="GO_Central"/>
</dbReference>
<dbReference type="GO" id="GO:0005524">
    <property type="term" value="F:ATP binding"/>
    <property type="evidence" value="ECO:0007669"/>
    <property type="project" value="UniProtKB-UniRule"/>
</dbReference>
<dbReference type="GO" id="GO:0036430">
    <property type="term" value="F:CMP kinase activity"/>
    <property type="evidence" value="ECO:0007669"/>
    <property type="project" value="RHEA"/>
</dbReference>
<dbReference type="GO" id="GO:0036431">
    <property type="term" value="F:dCMP kinase activity"/>
    <property type="evidence" value="ECO:0007669"/>
    <property type="project" value="RHEA"/>
</dbReference>
<dbReference type="GO" id="GO:0004592">
    <property type="term" value="F:pantoate-beta-alanine ligase activity"/>
    <property type="evidence" value="ECO:0007669"/>
    <property type="project" value="UniProtKB-UniRule"/>
</dbReference>
<dbReference type="GO" id="GO:0015949">
    <property type="term" value="P:nucleobase-containing small molecule interconversion"/>
    <property type="evidence" value="ECO:0000318"/>
    <property type="project" value="GO_Central"/>
</dbReference>
<dbReference type="GO" id="GO:0015940">
    <property type="term" value="P:pantothenate biosynthetic process"/>
    <property type="evidence" value="ECO:0007669"/>
    <property type="project" value="UniProtKB-UniRule"/>
</dbReference>
<dbReference type="GO" id="GO:0006220">
    <property type="term" value="P:pyrimidine nucleotide metabolic process"/>
    <property type="evidence" value="ECO:0007669"/>
    <property type="project" value="UniProtKB-UniRule"/>
</dbReference>
<dbReference type="CDD" id="cd02020">
    <property type="entry name" value="CMPK"/>
    <property type="match status" value="1"/>
</dbReference>
<dbReference type="CDD" id="cd00560">
    <property type="entry name" value="PanC"/>
    <property type="match status" value="1"/>
</dbReference>
<dbReference type="FunFam" id="3.40.50.300:FF:002458">
    <property type="entry name" value="Cytidylate kinase"/>
    <property type="match status" value="1"/>
</dbReference>
<dbReference type="FunFam" id="3.40.50.620:FF:000114">
    <property type="entry name" value="Pantothenate synthetase"/>
    <property type="match status" value="1"/>
</dbReference>
<dbReference type="Gene3D" id="3.40.50.620">
    <property type="entry name" value="HUPs"/>
    <property type="match status" value="1"/>
</dbReference>
<dbReference type="Gene3D" id="3.40.50.300">
    <property type="entry name" value="P-loop containing nucleotide triphosphate hydrolases"/>
    <property type="match status" value="1"/>
</dbReference>
<dbReference type="Gene3D" id="3.30.1300.10">
    <property type="entry name" value="Pantoate-beta-alanine ligase, C-terminal domain"/>
    <property type="match status" value="1"/>
</dbReference>
<dbReference type="HAMAP" id="MF_00238">
    <property type="entry name" value="Cytidyl_kinase_type1"/>
    <property type="match status" value="1"/>
</dbReference>
<dbReference type="HAMAP" id="MF_00158">
    <property type="entry name" value="PanC"/>
    <property type="match status" value="1"/>
</dbReference>
<dbReference type="HAMAP" id="MF_01349">
    <property type="entry name" value="PanCY"/>
    <property type="match status" value="1"/>
</dbReference>
<dbReference type="InterPro" id="IPR003136">
    <property type="entry name" value="Cytidylate_kin"/>
</dbReference>
<dbReference type="InterPro" id="IPR011994">
    <property type="entry name" value="Cytidylate_kinase_dom"/>
</dbReference>
<dbReference type="InterPro" id="IPR027417">
    <property type="entry name" value="P-loop_NTPase"/>
</dbReference>
<dbReference type="InterPro" id="IPR003721">
    <property type="entry name" value="Pantoate_ligase"/>
</dbReference>
<dbReference type="InterPro" id="IPR024894">
    <property type="entry name" value="Pantoate_ligase/cytidylate_kin"/>
</dbReference>
<dbReference type="InterPro" id="IPR042176">
    <property type="entry name" value="Pantoate_ligase_C"/>
</dbReference>
<dbReference type="InterPro" id="IPR014729">
    <property type="entry name" value="Rossmann-like_a/b/a_fold"/>
</dbReference>
<dbReference type="NCBIfam" id="TIGR00017">
    <property type="entry name" value="cmk"/>
    <property type="match status" value="1"/>
</dbReference>
<dbReference type="NCBIfam" id="TIGR00018">
    <property type="entry name" value="panC"/>
    <property type="match status" value="1"/>
</dbReference>
<dbReference type="NCBIfam" id="NF010004">
    <property type="entry name" value="PRK13477.1"/>
    <property type="match status" value="1"/>
</dbReference>
<dbReference type="PANTHER" id="PTHR21299:SF2">
    <property type="entry name" value="CYTIDYLATE KINASE"/>
    <property type="match status" value="1"/>
</dbReference>
<dbReference type="PANTHER" id="PTHR21299">
    <property type="entry name" value="CYTIDYLATE KINASE/PANTOATE-BETA-ALANINE LIGASE"/>
    <property type="match status" value="1"/>
</dbReference>
<dbReference type="Pfam" id="PF02224">
    <property type="entry name" value="Cytidylate_kin"/>
    <property type="match status" value="1"/>
</dbReference>
<dbReference type="Pfam" id="PF02569">
    <property type="entry name" value="Pantoate_ligase"/>
    <property type="match status" value="1"/>
</dbReference>
<dbReference type="SUPFAM" id="SSF52374">
    <property type="entry name" value="Nucleotidylyl transferase"/>
    <property type="match status" value="1"/>
</dbReference>
<dbReference type="SUPFAM" id="SSF52540">
    <property type="entry name" value="P-loop containing nucleoside triphosphate hydrolases"/>
    <property type="match status" value="1"/>
</dbReference>
<feature type="chain" id="PRO_0000239788" description="Bifunctional pantoate ligase/cytidylate kinase">
    <location>
        <begin position="1"/>
        <end position="515"/>
    </location>
</feature>
<feature type="region of interest" description="Pantoate--beta-alanine ligase" evidence="1">
    <location>
        <begin position="1"/>
        <end position="279"/>
    </location>
</feature>
<feature type="region of interest" description="Cytidylate kinase" evidence="1">
    <location>
        <begin position="280"/>
        <end position="515"/>
    </location>
</feature>
<feature type="active site" description="Proton donor" evidence="1">
    <location>
        <position position="38"/>
    </location>
</feature>
<feature type="binding site" evidence="1">
    <location>
        <begin position="31"/>
        <end position="38"/>
    </location>
    <ligand>
        <name>ATP</name>
        <dbReference type="ChEBI" id="CHEBI:30616"/>
    </ligand>
</feature>
<feature type="binding site" evidence="1">
    <location>
        <position position="62"/>
    </location>
    <ligand>
        <name>(R)-pantoate</name>
        <dbReference type="ChEBI" id="CHEBI:15980"/>
    </ligand>
</feature>
<feature type="binding site" evidence="1">
    <location>
        <position position="62"/>
    </location>
    <ligand>
        <name>beta-alanine</name>
        <dbReference type="ChEBI" id="CHEBI:57966"/>
    </ligand>
</feature>
<feature type="binding site" evidence="1">
    <location>
        <begin position="149"/>
        <end position="152"/>
    </location>
    <ligand>
        <name>ATP</name>
        <dbReference type="ChEBI" id="CHEBI:30616"/>
    </ligand>
</feature>
<feature type="binding site" evidence="1">
    <location>
        <position position="155"/>
    </location>
    <ligand>
        <name>(R)-pantoate</name>
        <dbReference type="ChEBI" id="CHEBI:15980"/>
    </ligand>
</feature>
<feature type="binding site" evidence="1">
    <location>
        <position position="178"/>
    </location>
    <ligand>
        <name>ATP</name>
        <dbReference type="ChEBI" id="CHEBI:30616"/>
    </ligand>
</feature>
<feature type="binding site" evidence="1">
    <location>
        <begin position="186"/>
        <end position="189"/>
    </location>
    <ligand>
        <name>ATP</name>
        <dbReference type="ChEBI" id="CHEBI:30616"/>
    </ligand>
</feature>
<sequence>MKVVETVARLEAFRRARAPVAGVEMGLVMTMGALHEGHRSLIARARRENTVLVVSIFVNPTQFGSSEDLSRYPRPLEADLELCRHEGVDLVFAPPESELYPLGSGTKVVPDPALTEVMCGLSRPGHFSGVATVVAKVMNLVQPVRAYFGQKDAQQVAVIKSVCCDLNIGGRIVVCPTVHDPDGLALSSRNVYLSSAQRSTALALPRALDKAAHLWAGGERQASELERAVRSVLASEPGLEIEYVAAVDPERLAPRQDNAGPVLVAAAVRVGSTRLIDNVVLGQHHERRPIIAIDGPAGAGKSTLARRLAQRLGFLYIDTGAMYRAVTWRAMQERIDPLDGERLSALTRAVRIRLAPGYQSAFPTRVWVDGEEVTRAVRDEAVSLHVSAVSSHPGVRSELVAQQRRIGEAGGVILDGRDIGTHVFSRAELKIYLTASVEERALRRADDLKAKGLPVPDIEVLKEQIRSRDNQDMSRAYAPLRKADDAIEVNTDTFTVQDTLDRLLALYRDKVGGSV</sequence>
<proteinExistence type="inferred from homology"/>
<gene>
    <name evidence="1" type="primary">panC/cmk</name>
    <name type="ordered locus">gll1806</name>
</gene>
<keyword id="KW-0067">ATP-binding</keyword>
<keyword id="KW-0963">Cytoplasm</keyword>
<keyword id="KW-0418">Kinase</keyword>
<keyword id="KW-0436">Ligase</keyword>
<keyword id="KW-0511">Multifunctional enzyme</keyword>
<keyword id="KW-0547">Nucleotide-binding</keyword>
<keyword id="KW-0566">Pantothenate biosynthesis</keyword>
<keyword id="KW-1185">Reference proteome</keyword>
<keyword id="KW-0808">Transferase</keyword>
<accession>Q7NJM6</accession>
<protein>
    <recommendedName>
        <fullName evidence="1">Bifunctional pantoate ligase/cytidylate kinase</fullName>
    </recommendedName>
    <domain>
        <recommendedName>
            <fullName evidence="1">Pantothenate synthetase</fullName>
            <shortName evidence="1">PS</shortName>
            <ecNumber evidence="1">6.3.2.1</ecNumber>
        </recommendedName>
        <alternativeName>
            <fullName evidence="1">Pantoate--beta-alanine ligase</fullName>
        </alternativeName>
        <alternativeName>
            <fullName evidence="1">Pantoate-activating enzyme</fullName>
        </alternativeName>
    </domain>
    <domain>
        <recommendedName>
            <fullName evidence="1">Cytidylate kinase</fullName>
            <shortName evidence="1">CK</shortName>
            <ecNumber evidence="1">2.7.4.25</ecNumber>
        </recommendedName>
        <alternativeName>
            <fullName evidence="1">Cytidine monophosphate kinase</fullName>
            <shortName evidence="1">CMP kinase</shortName>
        </alternativeName>
    </domain>
</protein>